<accession>B5R5A3</accession>
<evidence type="ECO:0000255" key="1">
    <source>
        <dbReference type="HAMAP-Rule" id="MF_01176"/>
    </source>
</evidence>
<proteinExistence type="inferred from homology"/>
<reference key="1">
    <citation type="journal article" date="2008" name="Genome Res.">
        <title>Comparative genome analysis of Salmonella enteritidis PT4 and Salmonella gallinarum 287/91 provides insights into evolutionary and host adaptation pathways.</title>
        <authorList>
            <person name="Thomson N.R."/>
            <person name="Clayton D.J."/>
            <person name="Windhorst D."/>
            <person name="Vernikos G."/>
            <person name="Davidson S."/>
            <person name="Churcher C."/>
            <person name="Quail M.A."/>
            <person name="Stevens M."/>
            <person name="Jones M.A."/>
            <person name="Watson M."/>
            <person name="Barron A."/>
            <person name="Layton A."/>
            <person name="Pickard D."/>
            <person name="Kingsley R.A."/>
            <person name="Bignell A."/>
            <person name="Clark L."/>
            <person name="Harris B."/>
            <person name="Ormond D."/>
            <person name="Abdellah Z."/>
            <person name="Brooks K."/>
            <person name="Cherevach I."/>
            <person name="Chillingworth T."/>
            <person name="Woodward J."/>
            <person name="Norberczak H."/>
            <person name="Lord A."/>
            <person name="Arrowsmith C."/>
            <person name="Jagels K."/>
            <person name="Moule S."/>
            <person name="Mungall K."/>
            <person name="Saunders M."/>
            <person name="Whitehead S."/>
            <person name="Chabalgoity J.A."/>
            <person name="Maskell D."/>
            <person name="Humphreys T."/>
            <person name="Roberts M."/>
            <person name="Barrow P.A."/>
            <person name="Dougan G."/>
            <person name="Parkhill J."/>
        </authorList>
    </citation>
    <scope>NUCLEOTIDE SEQUENCE [LARGE SCALE GENOMIC DNA]</scope>
    <source>
        <strain>P125109</strain>
    </source>
</reference>
<name>ISCR_SALEP</name>
<organism>
    <name type="scientific">Salmonella enteritidis PT4 (strain P125109)</name>
    <dbReference type="NCBI Taxonomy" id="550537"/>
    <lineage>
        <taxon>Bacteria</taxon>
        <taxon>Pseudomonadati</taxon>
        <taxon>Pseudomonadota</taxon>
        <taxon>Gammaproteobacteria</taxon>
        <taxon>Enterobacterales</taxon>
        <taxon>Enterobacteriaceae</taxon>
        <taxon>Salmonella</taxon>
    </lineage>
</organism>
<comment type="function">
    <text evidence="1">Regulates the transcription of several operons and genes involved in the biogenesis of Fe-S clusters and Fe-S-containing proteins.</text>
</comment>
<comment type="cofactor">
    <cofactor evidence="1">
        <name>[2Fe-2S] cluster</name>
        <dbReference type="ChEBI" id="CHEBI:190135"/>
    </cofactor>
    <text evidence="1">Binds 1 [2Fe-2S] cluster.</text>
</comment>
<feature type="chain" id="PRO_1000138106" description="HTH-type transcriptional regulator IscR">
    <location>
        <begin position="1"/>
        <end position="164"/>
    </location>
</feature>
<feature type="domain" description="HTH rrf2-type" evidence="1">
    <location>
        <begin position="2"/>
        <end position="131"/>
    </location>
</feature>
<feature type="DNA-binding region" description="H-T-H motif" evidence="1">
    <location>
        <begin position="28"/>
        <end position="51"/>
    </location>
</feature>
<feature type="binding site" evidence="1">
    <location>
        <position position="92"/>
    </location>
    <ligand>
        <name>[2Fe-2S] cluster</name>
        <dbReference type="ChEBI" id="CHEBI:190135"/>
    </ligand>
</feature>
<feature type="binding site" evidence="1">
    <location>
        <position position="98"/>
    </location>
    <ligand>
        <name>[2Fe-2S] cluster</name>
        <dbReference type="ChEBI" id="CHEBI:190135"/>
    </ligand>
</feature>
<feature type="binding site" evidence="1">
    <location>
        <position position="104"/>
    </location>
    <ligand>
        <name>[2Fe-2S] cluster</name>
        <dbReference type="ChEBI" id="CHEBI:190135"/>
    </ligand>
</feature>
<dbReference type="EMBL" id="AM933172">
    <property type="protein sequence ID" value="CAR34107.1"/>
    <property type="molecule type" value="Genomic_DNA"/>
</dbReference>
<dbReference type="RefSeq" id="WP_001241346.1">
    <property type="nucleotide sequence ID" value="NC_011294.1"/>
</dbReference>
<dbReference type="SMR" id="B5R5A3"/>
<dbReference type="KEGG" id="set:SEN2524"/>
<dbReference type="HOGENOM" id="CLU_107144_0_0_6"/>
<dbReference type="Proteomes" id="UP000000613">
    <property type="component" value="Chromosome"/>
</dbReference>
<dbReference type="GO" id="GO:0005829">
    <property type="term" value="C:cytosol"/>
    <property type="evidence" value="ECO:0007669"/>
    <property type="project" value="TreeGrafter"/>
</dbReference>
<dbReference type="GO" id="GO:0051537">
    <property type="term" value="F:2 iron, 2 sulfur cluster binding"/>
    <property type="evidence" value="ECO:0007669"/>
    <property type="project" value="UniProtKB-KW"/>
</dbReference>
<dbReference type="GO" id="GO:0003700">
    <property type="term" value="F:DNA-binding transcription factor activity"/>
    <property type="evidence" value="ECO:0007669"/>
    <property type="project" value="UniProtKB-UniRule"/>
</dbReference>
<dbReference type="GO" id="GO:0003690">
    <property type="term" value="F:double-stranded DNA binding"/>
    <property type="evidence" value="ECO:0007669"/>
    <property type="project" value="UniProtKB-UniRule"/>
</dbReference>
<dbReference type="GO" id="GO:0005506">
    <property type="term" value="F:iron ion binding"/>
    <property type="evidence" value="ECO:0007669"/>
    <property type="project" value="UniProtKB-UniRule"/>
</dbReference>
<dbReference type="FunFam" id="1.10.10.10:FF:000026">
    <property type="entry name" value="HTH-type transcriptional regulator IscR"/>
    <property type="match status" value="1"/>
</dbReference>
<dbReference type="Gene3D" id="1.10.10.10">
    <property type="entry name" value="Winged helix-like DNA-binding domain superfamily/Winged helix DNA-binding domain"/>
    <property type="match status" value="1"/>
</dbReference>
<dbReference type="HAMAP" id="MF_01176">
    <property type="entry name" value="HTH_type_IscR"/>
    <property type="match status" value="1"/>
</dbReference>
<dbReference type="InterPro" id="IPR010242">
    <property type="entry name" value="TF_HTH_IscR"/>
</dbReference>
<dbReference type="InterPro" id="IPR030489">
    <property type="entry name" value="TR_Rrf2-type_CS"/>
</dbReference>
<dbReference type="InterPro" id="IPR000944">
    <property type="entry name" value="Tscrpt_reg_Rrf2"/>
</dbReference>
<dbReference type="InterPro" id="IPR036388">
    <property type="entry name" value="WH-like_DNA-bd_sf"/>
</dbReference>
<dbReference type="InterPro" id="IPR036390">
    <property type="entry name" value="WH_DNA-bd_sf"/>
</dbReference>
<dbReference type="NCBIfam" id="TIGR02010">
    <property type="entry name" value="IscR"/>
    <property type="match status" value="1"/>
</dbReference>
<dbReference type="NCBIfam" id="NF008110">
    <property type="entry name" value="PRK10857.1"/>
    <property type="match status" value="1"/>
</dbReference>
<dbReference type="NCBIfam" id="TIGR00738">
    <property type="entry name" value="rrf2_super"/>
    <property type="match status" value="1"/>
</dbReference>
<dbReference type="PANTHER" id="PTHR33221:SF5">
    <property type="entry name" value="HTH-TYPE TRANSCRIPTIONAL REGULATOR ISCR"/>
    <property type="match status" value="1"/>
</dbReference>
<dbReference type="PANTHER" id="PTHR33221">
    <property type="entry name" value="WINGED HELIX-TURN-HELIX TRANSCRIPTIONAL REGULATOR, RRF2 FAMILY"/>
    <property type="match status" value="1"/>
</dbReference>
<dbReference type="Pfam" id="PF02082">
    <property type="entry name" value="Rrf2"/>
    <property type="match status" value="1"/>
</dbReference>
<dbReference type="SUPFAM" id="SSF46785">
    <property type="entry name" value="Winged helix' DNA-binding domain"/>
    <property type="match status" value="1"/>
</dbReference>
<dbReference type="PROSITE" id="PS01332">
    <property type="entry name" value="HTH_RRF2_1"/>
    <property type="match status" value="1"/>
</dbReference>
<dbReference type="PROSITE" id="PS51197">
    <property type="entry name" value="HTH_RRF2_2"/>
    <property type="match status" value="1"/>
</dbReference>
<gene>
    <name evidence="1" type="primary">iscR</name>
    <name type="ordered locus">SEN2524</name>
</gene>
<protein>
    <recommendedName>
        <fullName evidence="1">HTH-type transcriptional regulator IscR</fullName>
    </recommendedName>
</protein>
<sequence>MRLTSKGRYAVTAMLDVALNSEAGPVPLADISERQGISLSYLEQLFSRLRKNGLVSSVRGPGGGYLLGKDAGSIAVGEVISAVDESVDATRCQGKGGCQGGDKCLTHALWRDLSDRLTGFLNNITLGELVNNQEVLDVSGRQHTHDAPRASGRAQDAIDVKLRA</sequence>
<keyword id="KW-0001">2Fe-2S</keyword>
<keyword id="KW-0010">Activator</keyword>
<keyword id="KW-0238">DNA-binding</keyword>
<keyword id="KW-0408">Iron</keyword>
<keyword id="KW-0411">Iron-sulfur</keyword>
<keyword id="KW-0479">Metal-binding</keyword>
<keyword id="KW-0678">Repressor</keyword>
<keyword id="KW-0804">Transcription</keyword>
<keyword id="KW-0805">Transcription regulation</keyword>